<organism>
    <name type="scientific">Campylobacter jejuni subsp. jejuni serotype O:6 (strain 81116 / NCTC 11828)</name>
    <dbReference type="NCBI Taxonomy" id="407148"/>
    <lineage>
        <taxon>Bacteria</taxon>
        <taxon>Pseudomonadati</taxon>
        <taxon>Campylobacterota</taxon>
        <taxon>Epsilonproteobacteria</taxon>
        <taxon>Campylobacterales</taxon>
        <taxon>Campylobacteraceae</taxon>
        <taxon>Campylobacter</taxon>
    </lineage>
</organism>
<sequence length="44" mass="5244">MKRTYQPHGTPRKRTHGFRVRMKTKNGRKVINARRAKGRKRLAV</sequence>
<dbReference type="EMBL" id="CP000814">
    <property type="protein sequence ID" value="ABV52502.1"/>
    <property type="molecule type" value="Genomic_DNA"/>
</dbReference>
<dbReference type="RefSeq" id="WP_002776864.1">
    <property type="nucleotide sequence ID" value="NC_009839.1"/>
</dbReference>
<dbReference type="SMR" id="A8FM15"/>
<dbReference type="GeneID" id="66544167"/>
<dbReference type="KEGG" id="cju:C8J_0903"/>
<dbReference type="HOGENOM" id="CLU_129938_2_0_7"/>
<dbReference type="GO" id="GO:1990904">
    <property type="term" value="C:ribonucleoprotein complex"/>
    <property type="evidence" value="ECO:0007669"/>
    <property type="project" value="UniProtKB-KW"/>
</dbReference>
<dbReference type="GO" id="GO:0005840">
    <property type="term" value="C:ribosome"/>
    <property type="evidence" value="ECO:0007669"/>
    <property type="project" value="UniProtKB-KW"/>
</dbReference>
<dbReference type="GO" id="GO:0003735">
    <property type="term" value="F:structural constituent of ribosome"/>
    <property type="evidence" value="ECO:0007669"/>
    <property type="project" value="InterPro"/>
</dbReference>
<dbReference type="GO" id="GO:0006412">
    <property type="term" value="P:translation"/>
    <property type="evidence" value="ECO:0007669"/>
    <property type="project" value="UniProtKB-UniRule"/>
</dbReference>
<dbReference type="FunFam" id="1.10.287.3980:FF:000001">
    <property type="entry name" value="Mitochondrial ribosomal protein L34"/>
    <property type="match status" value="1"/>
</dbReference>
<dbReference type="Gene3D" id="1.10.287.3980">
    <property type="match status" value="1"/>
</dbReference>
<dbReference type="HAMAP" id="MF_00391">
    <property type="entry name" value="Ribosomal_bL34"/>
    <property type="match status" value="1"/>
</dbReference>
<dbReference type="InterPro" id="IPR000271">
    <property type="entry name" value="Ribosomal_bL34"/>
</dbReference>
<dbReference type="InterPro" id="IPR020939">
    <property type="entry name" value="Ribosomal_bL34_CS"/>
</dbReference>
<dbReference type="NCBIfam" id="TIGR01030">
    <property type="entry name" value="rpmH_bact"/>
    <property type="match status" value="1"/>
</dbReference>
<dbReference type="PANTHER" id="PTHR14503:SF4">
    <property type="entry name" value="LARGE RIBOSOMAL SUBUNIT PROTEIN BL34M"/>
    <property type="match status" value="1"/>
</dbReference>
<dbReference type="PANTHER" id="PTHR14503">
    <property type="entry name" value="MITOCHONDRIAL RIBOSOMAL PROTEIN 34 FAMILY MEMBER"/>
    <property type="match status" value="1"/>
</dbReference>
<dbReference type="Pfam" id="PF00468">
    <property type="entry name" value="Ribosomal_L34"/>
    <property type="match status" value="1"/>
</dbReference>
<dbReference type="PROSITE" id="PS00784">
    <property type="entry name" value="RIBOSOMAL_L34"/>
    <property type="match status" value="1"/>
</dbReference>
<protein>
    <recommendedName>
        <fullName evidence="1">Large ribosomal subunit protein bL34</fullName>
    </recommendedName>
    <alternativeName>
        <fullName evidence="2">50S ribosomal protein L34</fullName>
    </alternativeName>
</protein>
<name>RL34_CAMJ8</name>
<reference key="1">
    <citation type="journal article" date="2007" name="J. Bacteriol.">
        <title>The complete genome sequence of Campylobacter jejuni strain 81116 (NCTC11828).</title>
        <authorList>
            <person name="Pearson B.M."/>
            <person name="Gaskin D.J.H."/>
            <person name="Segers R.P.A.M."/>
            <person name="Wells J.M."/>
            <person name="Nuijten P.J.M."/>
            <person name="van Vliet A.H.M."/>
        </authorList>
    </citation>
    <scope>NUCLEOTIDE SEQUENCE [LARGE SCALE GENOMIC DNA]</scope>
    <source>
        <strain>81116 / NCTC 11828</strain>
    </source>
</reference>
<comment type="similarity">
    <text evidence="1">Belongs to the bacterial ribosomal protein bL34 family.</text>
</comment>
<gene>
    <name evidence="1" type="primary">rpmH</name>
    <name type="ordered locus">C8J_0903</name>
</gene>
<feature type="chain" id="PRO_1000072215" description="Large ribosomal subunit protein bL34">
    <location>
        <begin position="1"/>
        <end position="44"/>
    </location>
</feature>
<accession>A8FM15</accession>
<proteinExistence type="inferred from homology"/>
<keyword id="KW-0687">Ribonucleoprotein</keyword>
<keyword id="KW-0689">Ribosomal protein</keyword>
<evidence type="ECO:0000255" key="1">
    <source>
        <dbReference type="HAMAP-Rule" id="MF_00391"/>
    </source>
</evidence>
<evidence type="ECO:0000305" key="2"/>